<reference key="1">
    <citation type="journal article" date="2006" name="Proc. Natl. Acad. Sci. U.S.A.">
        <title>Comparative genomics of the lactic acid bacteria.</title>
        <authorList>
            <person name="Makarova K.S."/>
            <person name="Slesarev A."/>
            <person name="Wolf Y.I."/>
            <person name="Sorokin A."/>
            <person name="Mirkin B."/>
            <person name="Koonin E.V."/>
            <person name="Pavlov A."/>
            <person name="Pavlova N."/>
            <person name="Karamychev V."/>
            <person name="Polouchine N."/>
            <person name="Shakhova V."/>
            <person name="Grigoriev I."/>
            <person name="Lou Y."/>
            <person name="Rohksar D."/>
            <person name="Lucas S."/>
            <person name="Huang K."/>
            <person name="Goodstein D.M."/>
            <person name="Hawkins T."/>
            <person name="Plengvidhya V."/>
            <person name="Welker D."/>
            <person name="Hughes J."/>
            <person name="Goh Y."/>
            <person name="Benson A."/>
            <person name="Baldwin K."/>
            <person name="Lee J.-H."/>
            <person name="Diaz-Muniz I."/>
            <person name="Dosti B."/>
            <person name="Smeianov V."/>
            <person name="Wechter W."/>
            <person name="Barabote R."/>
            <person name="Lorca G."/>
            <person name="Altermann E."/>
            <person name="Barrangou R."/>
            <person name="Ganesan B."/>
            <person name="Xie Y."/>
            <person name="Rawsthorne H."/>
            <person name="Tamir D."/>
            <person name="Parker C."/>
            <person name="Breidt F."/>
            <person name="Broadbent J.R."/>
            <person name="Hutkins R."/>
            <person name="O'Sullivan D."/>
            <person name="Steele J."/>
            <person name="Unlu G."/>
            <person name="Saier M.H. Jr."/>
            <person name="Klaenhammer T."/>
            <person name="Richardson P."/>
            <person name="Kozyavkin S."/>
            <person name="Weimer B.C."/>
            <person name="Mills D.A."/>
        </authorList>
    </citation>
    <scope>NUCLEOTIDE SEQUENCE [LARGE SCALE GENOMIC DNA]</scope>
    <source>
        <strain>ATCC BAA-331 / PSU-1</strain>
    </source>
</reference>
<sequence>MAAISMKELLEAGAHFGHQTRRWDPRMDEYIFTSRNGIHIIDLQKTLRMADDAYNWVKGEAADGANFLFVGTKKQATEAIEEEAKRAGVAYVNHRWLGGTLTNWNTIKTRINKLKELRAAEEDGSFDKLPKKEASQLGKQKAKLEKFLGGIADMEDIPDVMFVVDPKTEEIAVKEARSLNIPVVAMIDTNGNPDLVDVKIPANDDAIRAVKLITSKMADAIIEGRQGQDAGEDSAEKTFADTADGEGDFEESSNNENQEA</sequence>
<gene>
    <name evidence="1" type="primary">rpsB</name>
    <name type="ordered locus">OEOE_0975</name>
</gene>
<organism>
    <name type="scientific">Oenococcus oeni (strain ATCC BAA-331 / PSU-1)</name>
    <dbReference type="NCBI Taxonomy" id="203123"/>
    <lineage>
        <taxon>Bacteria</taxon>
        <taxon>Bacillati</taxon>
        <taxon>Bacillota</taxon>
        <taxon>Bacilli</taxon>
        <taxon>Lactobacillales</taxon>
        <taxon>Lactobacillaceae</taxon>
        <taxon>Oenococcus</taxon>
    </lineage>
</organism>
<accession>Q04F88</accession>
<evidence type="ECO:0000255" key="1">
    <source>
        <dbReference type="HAMAP-Rule" id="MF_00291"/>
    </source>
</evidence>
<evidence type="ECO:0000256" key="2">
    <source>
        <dbReference type="SAM" id="MobiDB-lite"/>
    </source>
</evidence>
<evidence type="ECO:0000305" key="3"/>
<name>RS2_OENOB</name>
<proteinExistence type="inferred from homology"/>
<dbReference type="EMBL" id="CP000411">
    <property type="protein sequence ID" value="ABJ56884.1"/>
    <property type="molecule type" value="Genomic_DNA"/>
</dbReference>
<dbReference type="RefSeq" id="WP_002820490.1">
    <property type="nucleotide sequence ID" value="NC_008528.1"/>
</dbReference>
<dbReference type="SMR" id="Q04F88"/>
<dbReference type="STRING" id="203123.OEOE_0975"/>
<dbReference type="GeneID" id="75065952"/>
<dbReference type="KEGG" id="ooe:OEOE_0975"/>
<dbReference type="eggNOG" id="COG0052">
    <property type="taxonomic scope" value="Bacteria"/>
</dbReference>
<dbReference type="HOGENOM" id="CLU_040318_1_2_9"/>
<dbReference type="Proteomes" id="UP000000774">
    <property type="component" value="Chromosome"/>
</dbReference>
<dbReference type="GO" id="GO:0022627">
    <property type="term" value="C:cytosolic small ribosomal subunit"/>
    <property type="evidence" value="ECO:0007669"/>
    <property type="project" value="TreeGrafter"/>
</dbReference>
<dbReference type="GO" id="GO:0003735">
    <property type="term" value="F:structural constituent of ribosome"/>
    <property type="evidence" value="ECO:0007669"/>
    <property type="project" value="InterPro"/>
</dbReference>
<dbReference type="GO" id="GO:0006412">
    <property type="term" value="P:translation"/>
    <property type="evidence" value="ECO:0007669"/>
    <property type="project" value="UniProtKB-UniRule"/>
</dbReference>
<dbReference type="CDD" id="cd01425">
    <property type="entry name" value="RPS2"/>
    <property type="match status" value="1"/>
</dbReference>
<dbReference type="FunFam" id="1.10.287.610:FF:000001">
    <property type="entry name" value="30S ribosomal protein S2"/>
    <property type="match status" value="1"/>
</dbReference>
<dbReference type="Gene3D" id="3.40.50.10490">
    <property type="entry name" value="Glucose-6-phosphate isomerase like protein, domain 1"/>
    <property type="match status" value="1"/>
</dbReference>
<dbReference type="Gene3D" id="1.10.287.610">
    <property type="entry name" value="Helix hairpin bin"/>
    <property type="match status" value="1"/>
</dbReference>
<dbReference type="HAMAP" id="MF_00291_B">
    <property type="entry name" value="Ribosomal_uS2_B"/>
    <property type="match status" value="1"/>
</dbReference>
<dbReference type="InterPro" id="IPR001865">
    <property type="entry name" value="Ribosomal_uS2"/>
</dbReference>
<dbReference type="InterPro" id="IPR005706">
    <property type="entry name" value="Ribosomal_uS2_bac/mit/plastid"/>
</dbReference>
<dbReference type="InterPro" id="IPR018130">
    <property type="entry name" value="Ribosomal_uS2_CS"/>
</dbReference>
<dbReference type="InterPro" id="IPR023591">
    <property type="entry name" value="Ribosomal_uS2_flav_dom_sf"/>
</dbReference>
<dbReference type="NCBIfam" id="TIGR01011">
    <property type="entry name" value="rpsB_bact"/>
    <property type="match status" value="1"/>
</dbReference>
<dbReference type="PANTHER" id="PTHR12534">
    <property type="entry name" value="30S RIBOSOMAL PROTEIN S2 PROKARYOTIC AND ORGANELLAR"/>
    <property type="match status" value="1"/>
</dbReference>
<dbReference type="PANTHER" id="PTHR12534:SF0">
    <property type="entry name" value="SMALL RIBOSOMAL SUBUNIT PROTEIN US2M"/>
    <property type="match status" value="1"/>
</dbReference>
<dbReference type="Pfam" id="PF00318">
    <property type="entry name" value="Ribosomal_S2"/>
    <property type="match status" value="1"/>
</dbReference>
<dbReference type="PRINTS" id="PR00395">
    <property type="entry name" value="RIBOSOMALS2"/>
</dbReference>
<dbReference type="SUPFAM" id="SSF52313">
    <property type="entry name" value="Ribosomal protein S2"/>
    <property type="match status" value="1"/>
</dbReference>
<dbReference type="PROSITE" id="PS00962">
    <property type="entry name" value="RIBOSOMAL_S2_1"/>
    <property type="match status" value="1"/>
</dbReference>
<dbReference type="PROSITE" id="PS00963">
    <property type="entry name" value="RIBOSOMAL_S2_2"/>
    <property type="match status" value="1"/>
</dbReference>
<feature type="chain" id="PRO_1000004014" description="Small ribosomal subunit protein uS2">
    <location>
        <begin position="1"/>
        <end position="260"/>
    </location>
</feature>
<feature type="region of interest" description="Disordered" evidence="2">
    <location>
        <begin position="224"/>
        <end position="260"/>
    </location>
</feature>
<feature type="compositionally biased region" description="Acidic residues" evidence="2">
    <location>
        <begin position="243"/>
        <end position="260"/>
    </location>
</feature>
<keyword id="KW-1185">Reference proteome</keyword>
<keyword id="KW-0687">Ribonucleoprotein</keyword>
<keyword id="KW-0689">Ribosomal protein</keyword>
<comment type="similarity">
    <text evidence="1">Belongs to the universal ribosomal protein uS2 family.</text>
</comment>
<protein>
    <recommendedName>
        <fullName evidence="1">Small ribosomal subunit protein uS2</fullName>
    </recommendedName>
    <alternativeName>
        <fullName evidence="3">30S ribosomal protein S2</fullName>
    </alternativeName>
</protein>